<feature type="chain" id="PRO_0000420114" description="Probable folate-biopterin transporter 2">
    <location>
        <begin position="1"/>
        <end position="499"/>
    </location>
</feature>
<feature type="transmembrane region" description="Helical" evidence="2">
    <location>
        <begin position="43"/>
        <end position="63"/>
    </location>
</feature>
<feature type="transmembrane region" description="Helical" evidence="2">
    <location>
        <begin position="92"/>
        <end position="112"/>
    </location>
</feature>
<feature type="transmembrane region" description="Helical" evidence="2">
    <location>
        <begin position="116"/>
        <end position="136"/>
    </location>
</feature>
<feature type="transmembrane region" description="Helical" evidence="2">
    <location>
        <begin position="141"/>
        <end position="161"/>
    </location>
</feature>
<feature type="transmembrane region" description="Helical" evidence="2">
    <location>
        <begin position="185"/>
        <end position="205"/>
    </location>
</feature>
<feature type="transmembrane region" description="Helical" evidence="2">
    <location>
        <begin position="209"/>
        <end position="229"/>
    </location>
</feature>
<feature type="transmembrane region" description="Helical" evidence="2">
    <location>
        <begin position="266"/>
        <end position="286"/>
    </location>
</feature>
<feature type="transmembrane region" description="Helical" evidence="2">
    <location>
        <begin position="302"/>
        <end position="322"/>
    </location>
</feature>
<feature type="transmembrane region" description="Helical" evidence="2">
    <location>
        <begin position="330"/>
        <end position="350"/>
    </location>
</feature>
<feature type="transmembrane region" description="Helical" evidence="2">
    <location>
        <begin position="354"/>
        <end position="374"/>
    </location>
</feature>
<feature type="transmembrane region" description="Helical" evidence="2">
    <location>
        <begin position="399"/>
        <end position="419"/>
    </location>
</feature>
<feature type="transmembrane region" description="Helical" evidence="2">
    <location>
        <begin position="435"/>
        <end position="455"/>
    </location>
</feature>
<feature type="sequence conflict" description="In Ref. 3; AAO64142 and 5; BAF00588." evidence="3" ref="3 5">
    <original>K</original>
    <variation>E</variation>
    <location>
        <position position="457"/>
    </location>
</feature>
<protein>
    <recommendedName>
        <fullName>Probable folate-biopterin transporter 2</fullName>
    </recommendedName>
</protein>
<organism>
    <name type="scientific">Arabidopsis thaliana</name>
    <name type="common">Mouse-ear cress</name>
    <dbReference type="NCBI Taxonomy" id="3702"/>
    <lineage>
        <taxon>Eukaryota</taxon>
        <taxon>Viridiplantae</taxon>
        <taxon>Streptophyta</taxon>
        <taxon>Embryophyta</taxon>
        <taxon>Tracheophyta</taxon>
        <taxon>Spermatophyta</taxon>
        <taxon>Magnoliopsida</taxon>
        <taxon>eudicotyledons</taxon>
        <taxon>Gunneridae</taxon>
        <taxon>Pentapetalae</taxon>
        <taxon>rosids</taxon>
        <taxon>malvids</taxon>
        <taxon>Brassicales</taxon>
        <taxon>Brassicaceae</taxon>
        <taxon>Camelineae</taxon>
        <taxon>Arabidopsis</taxon>
    </lineage>
</organism>
<keyword id="KW-0472">Membrane</keyword>
<keyword id="KW-1185">Reference proteome</keyword>
<keyword id="KW-0812">Transmembrane</keyword>
<keyword id="KW-1133">Transmembrane helix</keyword>
<keyword id="KW-0813">Transport</keyword>
<dbReference type="EMBL" id="AC005964">
    <property type="status" value="NOT_ANNOTATED_CDS"/>
    <property type="molecule type" value="Genomic_DNA"/>
</dbReference>
<dbReference type="EMBL" id="CP002688">
    <property type="protein sequence ID" value="AED93394.1"/>
    <property type="molecule type" value="Genomic_DNA"/>
</dbReference>
<dbReference type="EMBL" id="BT005727">
    <property type="protein sequence ID" value="AAO64142.1"/>
    <property type="molecule type" value="mRNA"/>
</dbReference>
<dbReference type="EMBL" id="BT020533">
    <property type="protein sequence ID" value="AAW70379.1"/>
    <property type="molecule type" value="mRNA"/>
</dbReference>
<dbReference type="EMBL" id="AK228683">
    <property type="protein sequence ID" value="BAF00588.1"/>
    <property type="molecule type" value="mRNA"/>
</dbReference>
<dbReference type="RefSeq" id="NP_197887.1">
    <property type="nucleotide sequence ID" value="NM_122414.3"/>
</dbReference>
<dbReference type="FunCoup" id="Q5FV41">
    <property type="interactions" value="3"/>
</dbReference>
<dbReference type="iPTMnet" id="Q5FV41"/>
<dbReference type="PaxDb" id="3702-AT5G25050.1"/>
<dbReference type="ProteomicsDB" id="222434"/>
<dbReference type="EnsemblPlants" id="AT5G25050.1">
    <property type="protein sequence ID" value="AT5G25050.1"/>
    <property type="gene ID" value="AT5G25050"/>
</dbReference>
<dbReference type="GeneID" id="832576"/>
<dbReference type="Gramene" id="AT5G25050.1">
    <property type="protein sequence ID" value="AT5G25050.1"/>
    <property type="gene ID" value="AT5G25050"/>
</dbReference>
<dbReference type="KEGG" id="ath:AT5G25050"/>
<dbReference type="Araport" id="AT5G25050"/>
<dbReference type="TAIR" id="AT5G25050"/>
<dbReference type="eggNOG" id="ENOG502QPUV">
    <property type="taxonomic scope" value="Eukaryota"/>
</dbReference>
<dbReference type="HOGENOM" id="CLU_018563_1_1_1"/>
<dbReference type="InParanoid" id="Q5FV41"/>
<dbReference type="OMA" id="MTGRLKW"/>
<dbReference type="PhylomeDB" id="Q5FV41"/>
<dbReference type="PRO" id="PR:Q5FV41"/>
<dbReference type="Proteomes" id="UP000006548">
    <property type="component" value="Chromosome 5"/>
</dbReference>
<dbReference type="ExpressionAtlas" id="Q5FV41">
    <property type="expression patterns" value="baseline and differential"/>
</dbReference>
<dbReference type="GO" id="GO:0016020">
    <property type="term" value="C:membrane"/>
    <property type="evidence" value="ECO:0007669"/>
    <property type="project" value="UniProtKB-SubCell"/>
</dbReference>
<dbReference type="CDD" id="cd17484">
    <property type="entry name" value="MFS_FBT"/>
    <property type="match status" value="1"/>
</dbReference>
<dbReference type="Gene3D" id="1.20.1250.20">
    <property type="entry name" value="MFS general substrate transporter like domains"/>
    <property type="match status" value="1"/>
</dbReference>
<dbReference type="InterPro" id="IPR039309">
    <property type="entry name" value="BT1"/>
</dbReference>
<dbReference type="InterPro" id="IPR004324">
    <property type="entry name" value="FBT"/>
</dbReference>
<dbReference type="InterPro" id="IPR036259">
    <property type="entry name" value="MFS_trans_sf"/>
</dbReference>
<dbReference type="NCBIfam" id="TIGR00788">
    <property type="entry name" value="fbt"/>
    <property type="match status" value="1"/>
</dbReference>
<dbReference type="PANTHER" id="PTHR31585">
    <property type="entry name" value="FOLATE-BIOPTERIN TRANSPORTER 1, CHLOROPLASTIC"/>
    <property type="match status" value="1"/>
</dbReference>
<dbReference type="PANTHER" id="PTHR31585:SF6">
    <property type="entry name" value="FOLATE-BIOPTERIN TRANSPORTER 2-RELATED"/>
    <property type="match status" value="1"/>
</dbReference>
<dbReference type="Pfam" id="PF03092">
    <property type="entry name" value="BT1"/>
    <property type="match status" value="1"/>
</dbReference>
<dbReference type="SUPFAM" id="SSF103473">
    <property type="entry name" value="MFS general substrate transporter"/>
    <property type="match status" value="1"/>
</dbReference>
<sequence>MVVEEQSLENGGSVHVVKGESNFRNVVCGPVRWLKMLSSELHWSFVFGVVSLYGINQGLGGSLGRVATEYYMKDVQKVQPSESQALTAITKIPWIIKPLWGILTDVLPIFGFHRRPYFILAGVLGVVSLLFISLHSNLHLYLALFWMTISSAAMAIADVTIDACTAYNSIKHPSLASDMQSLCSLSSSIGALLGFFMSGILVHLVGSKGVFGLLTFPFALVSVVGIVFSEPHVPGFSYKQVNQKFTDAGKAMWRTMKCSDVWRPSLYMYISLTLGLNIHEGLFYWFTDSKDGPLFAQETVGFILSIGSIGSILAATLYQLVLKDHPFRGLCLWTQLLFALSGMLDLILVFRLNLKFGLPDYLFIVVDEIVSQMIGRLKWMPLLVLTSKLCPHGIEGTFFALLMSIDNAGLMTSSWLGGIMLHVLKVTRTEFGNLWLAVLVRNVMRLLPLCFLFLVPKGDQNTFKLPDEIMGEDSDEEKDEKEGTRNLELASLVHSVDRR</sequence>
<reference key="1">
    <citation type="journal article" date="2000" name="Nature">
        <title>Sequence and analysis of chromosome 5 of the plant Arabidopsis thaliana.</title>
        <authorList>
            <person name="Tabata S."/>
            <person name="Kaneko T."/>
            <person name="Nakamura Y."/>
            <person name="Kotani H."/>
            <person name="Kato T."/>
            <person name="Asamizu E."/>
            <person name="Miyajima N."/>
            <person name="Sasamoto S."/>
            <person name="Kimura T."/>
            <person name="Hosouchi T."/>
            <person name="Kawashima K."/>
            <person name="Kohara M."/>
            <person name="Matsumoto M."/>
            <person name="Matsuno A."/>
            <person name="Muraki A."/>
            <person name="Nakayama S."/>
            <person name="Nakazaki N."/>
            <person name="Naruo K."/>
            <person name="Okumura S."/>
            <person name="Shinpo S."/>
            <person name="Takeuchi C."/>
            <person name="Wada T."/>
            <person name="Watanabe A."/>
            <person name="Yamada M."/>
            <person name="Yasuda M."/>
            <person name="Sato S."/>
            <person name="de la Bastide M."/>
            <person name="Huang E."/>
            <person name="Spiegel L."/>
            <person name="Gnoj L."/>
            <person name="O'Shaughnessy A."/>
            <person name="Preston R."/>
            <person name="Habermann K."/>
            <person name="Murray J."/>
            <person name="Johnson D."/>
            <person name="Rohlfing T."/>
            <person name="Nelson J."/>
            <person name="Stoneking T."/>
            <person name="Pepin K."/>
            <person name="Spieth J."/>
            <person name="Sekhon M."/>
            <person name="Armstrong J."/>
            <person name="Becker M."/>
            <person name="Belter E."/>
            <person name="Cordum H."/>
            <person name="Cordes M."/>
            <person name="Courtney L."/>
            <person name="Courtney W."/>
            <person name="Dante M."/>
            <person name="Du H."/>
            <person name="Edwards J."/>
            <person name="Fryman J."/>
            <person name="Haakensen B."/>
            <person name="Lamar E."/>
            <person name="Latreille P."/>
            <person name="Leonard S."/>
            <person name="Meyer R."/>
            <person name="Mulvaney E."/>
            <person name="Ozersky P."/>
            <person name="Riley A."/>
            <person name="Strowmatt C."/>
            <person name="Wagner-McPherson C."/>
            <person name="Wollam A."/>
            <person name="Yoakum M."/>
            <person name="Bell M."/>
            <person name="Dedhia N."/>
            <person name="Parnell L."/>
            <person name="Shah R."/>
            <person name="Rodriguez M."/>
            <person name="Hoon See L."/>
            <person name="Vil D."/>
            <person name="Baker J."/>
            <person name="Kirchoff K."/>
            <person name="Toth K."/>
            <person name="King L."/>
            <person name="Bahret A."/>
            <person name="Miller B."/>
            <person name="Marra M.A."/>
            <person name="Martienssen R."/>
            <person name="McCombie W.R."/>
            <person name="Wilson R.K."/>
            <person name="Murphy G."/>
            <person name="Bancroft I."/>
            <person name="Volckaert G."/>
            <person name="Wambutt R."/>
            <person name="Duesterhoeft A."/>
            <person name="Stiekema W."/>
            <person name="Pohl T."/>
            <person name="Entian K.-D."/>
            <person name="Terryn N."/>
            <person name="Hartley N."/>
            <person name="Bent E."/>
            <person name="Johnson S."/>
            <person name="Langham S.-A."/>
            <person name="McCullagh B."/>
            <person name="Robben J."/>
            <person name="Grymonprez B."/>
            <person name="Zimmermann W."/>
            <person name="Ramsperger U."/>
            <person name="Wedler H."/>
            <person name="Balke K."/>
            <person name="Wedler E."/>
            <person name="Peters S."/>
            <person name="van Staveren M."/>
            <person name="Dirkse W."/>
            <person name="Mooijman P."/>
            <person name="Klein Lankhorst R."/>
            <person name="Weitzenegger T."/>
            <person name="Bothe G."/>
            <person name="Rose M."/>
            <person name="Hauf J."/>
            <person name="Berneiser S."/>
            <person name="Hempel S."/>
            <person name="Feldpausch M."/>
            <person name="Lamberth S."/>
            <person name="Villarroel R."/>
            <person name="Gielen J."/>
            <person name="Ardiles W."/>
            <person name="Bents O."/>
            <person name="Lemcke K."/>
            <person name="Kolesov G."/>
            <person name="Mayer K.F.X."/>
            <person name="Rudd S."/>
            <person name="Schoof H."/>
            <person name="Schueller C."/>
            <person name="Zaccaria P."/>
            <person name="Mewes H.-W."/>
            <person name="Bevan M."/>
            <person name="Fransz P.F."/>
        </authorList>
    </citation>
    <scope>NUCLEOTIDE SEQUENCE [LARGE SCALE GENOMIC DNA]</scope>
    <source>
        <strain>cv. Columbia</strain>
    </source>
</reference>
<reference key="2">
    <citation type="journal article" date="2017" name="Plant J.">
        <title>Araport11: a complete reannotation of the Arabidopsis thaliana reference genome.</title>
        <authorList>
            <person name="Cheng C.Y."/>
            <person name="Krishnakumar V."/>
            <person name="Chan A.P."/>
            <person name="Thibaud-Nissen F."/>
            <person name="Schobel S."/>
            <person name="Town C.D."/>
        </authorList>
    </citation>
    <scope>GENOME REANNOTATION</scope>
    <source>
        <strain>cv. Columbia</strain>
    </source>
</reference>
<reference key="3">
    <citation type="journal article" date="2003" name="Science">
        <title>Empirical analysis of transcriptional activity in the Arabidopsis genome.</title>
        <authorList>
            <person name="Yamada K."/>
            <person name="Lim J."/>
            <person name="Dale J.M."/>
            <person name="Chen H."/>
            <person name="Shinn P."/>
            <person name="Palm C.J."/>
            <person name="Southwick A.M."/>
            <person name="Wu H.C."/>
            <person name="Kim C.J."/>
            <person name="Nguyen M."/>
            <person name="Pham P.K."/>
            <person name="Cheuk R.F."/>
            <person name="Karlin-Newmann G."/>
            <person name="Liu S.X."/>
            <person name="Lam B."/>
            <person name="Sakano H."/>
            <person name="Wu T."/>
            <person name="Yu G."/>
            <person name="Miranda M."/>
            <person name="Quach H.L."/>
            <person name="Tripp M."/>
            <person name="Chang C.H."/>
            <person name="Lee J.M."/>
            <person name="Toriumi M.J."/>
            <person name="Chan M.M."/>
            <person name="Tang C.C."/>
            <person name="Onodera C.S."/>
            <person name="Deng J.M."/>
            <person name="Akiyama K."/>
            <person name="Ansari Y."/>
            <person name="Arakawa T."/>
            <person name="Banh J."/>
            <person name="Banno F."/>
            <person name="Bowser L."/>
            <person name="Brooks S.Y."/>
            <person name="Carninci P."/>
            <person name="Chao Q."/>
            <person name="Choy N."/>
            <person name="Enju A."/>
            <person name="Goldsmith A.D."/>
            <person name="Gurjal M."/>
            <person name="Hansen N.F."/>
            <person name="Hayashizaki Y."/>
            <person name="Johnson-Hopson C."/>
            <person name="Hsuan V.W."/>
            <person name="Iida K."/>
            <person name="Karnes M."/>
            <person name="Khan S."/>
            <person name="Koesema E."/>
            <person name="Ishida J."/>
            <person name="Jiang P.X."/>
            <person name="Jones T."/>
            <person name="Kawai J."/>
            <person name="Kamiya A."/>
            <person name="Meyers C."/>
            <person name="Nakajima M."/>
            <person name="Narusaka M."/>
            <person name="Seki M."/>
            <person name="Sakurai T."/>
            <person name="Satou M."/>
            <person name="Tamse R."/>
            <person name="Vaysberg M."/>
            <person name="Wallender E.K."/>
            <person name="Wong C."/>
            <person name="Yamamura Y."/>
            <person name="Yuan S."/>
            <person name="Shinozaki K."/>
            <person name="Davis R.W."/>
            <person name="Theologis A."/>
            <person name="Ecker J.R."/>
        </authorList>
    </citation>
    <scope>NUCLEOTIDE SEQUENCE [LARGE SCALE MRNA]</scope>
    <source>
        <strain>cv. Columbia</strain>
    </source>
</reference>
<reference key="4">
    <citation type="submission" date="2005-01" db="EMBL/GenBank/DDBJ databases">
        <title>Arabidopsis ORF clones.</title>
        <authorList>
            <person name="Cheuk R.F."/>
            <person name="Chen H."/>
            <person name="Kim C.J."/>
            <person name="Shinn P."/>
            <person name="Ecker J.R."/>
        </authorList>
    </citation>
    <scope>NUCLEOTIDE SEQUENCE [LARGE SCALE MRNA]</scope>
    <source>
        <strain>cv. Columbia</strain>
    </source>
</reference>
<reference key="5">
    <citation type="submission" date="2006-07" db="EMBL/GenBank/DDBJ databases">
        <title>Large-scale analysis of RIKEN Arabidopsis full-length (RAFL) cDNAs.</title>
        <authorList>
            <person name="Totoki Y."/>
            <person name="Seki M."/>
            <person name="Ishida J."/>
            <person name="Nakajima M."/>
            <person name="Enju A."/>
            <person name="Kamiya A."/>
            <person name="Narusaka M."/>
            <person name="Shin-i T."/>
            <person name="Nakagawa M."/>
            <person name="Sakamoto N."/>
            <person name="Oishi K."/>
            <person name="Kohara Y."/>
            <person name="Kobayashi M."/>
            <person name="Toyoda A."/>
            <person name="Sakaki Y."/>
            <person name="Sakurai T."/>
            <person name="Iida K."/>
            <person name="Akiyama K."/>
            <person name="Satou M."/>
            <person name="Toyoda T."/>
            <person name="Konagaya A."/>
            <person name="Carninci P."/>
            <person name="Kawai J."/>
            <person name="Hayashizaki Y."/>
            <person name="Shinozaki K."/>
        </authorList>
    </citation>
    <scope>NUCLEOTIDE SEQUENCE [LARGE SCALE MRNA]</scope>
    <source>
        <strain>cv. Columbia</strain>
    </source>
</reference>
<reference key="6">
    <citation type="journal article" date="2005" name="J. Biol. Chem.">
        <title>Higher plant plastids and cyanobacteria have folate carriers related to those of trypanosomatids.</title>
        <authorList>
            <person name="Klaus S.M."/>
            <person name="Kunji E.R."/>
            <person name="Bozzo G.G."/>
            <person name="Noiriel A."/>
            <person name="de la Garza R.D."/>
            <person name="Basset G.J."/>
            <person name="Ravanel S."/>
            <person name="Rebeille F."/>
            <person name="Gregory J.F. III"/>
            <person name="Hanson A.D."/>
        </authorList>
    </citation>
    <scope>GENE FAMILY</scope>
</reference>
<comment type="function">
    <text evidence="1">Could mediate folate transport.</text>
</comment>
<comment type="subcellular location">
    <subcellularLocation>
        <location evidence="3">Membrane</location>
        <topology evidence="3">Multi-pass membrane protein</topology>
    </subcellularLocation>
</comment>
<comment type="similarity">
    <text evidence="3">Belongs to the major facilitator superfamily. Folate-biopterin transporter (TC 2.A.71) family.</text>
</comment>
<gene>
    <name type="ordered locus">At5g25050</name>
    <name type="ORF">T11H3.60</name>
</gene>
<proteinExistence type="evidence at transcript level"/>
<accession>Q5FV41</accession>
<accession>Q84TJ6</accession>
<evidence type="ECO:0000250" key="1"/>
<evidence type="ECO:0000255" key="2"/>
<evidence type="ECO:0000305" key="3"/>
<name>FBT2_ARATH</name>